<feature type="chain" id="PRO_1000075758" description="Ribonuclease 3">
    <location>
        <begin position="1"/>
        <end position="230"/>
    </location>
</feature>
<feature type="domain" description="RNase III" evidence="1">
    <location>
        <begin position="5"/>
        <end position="125"/>
    </location>
</feature>
<feature type="domain" description="DRBM" evidence="1">
    <location>
        <begin position="153"/>
        <end position="223"/>
    </location>
</feature>
<feature type="active site" evidence="1">
    <location>
        <position position="44"/>
    </location>
</feature>
<feature type="active site" evidence="1">
    <location>
        <position position="114"/>
    </location>
</feature>
<feature type="binding site" evidence="1">
    <location>
        <position position="40"/>
    </location>
    <ligand>
        <name>Mg(2+)</name>
        <dbReference type="ChEBI" id="CHEBI:18420"/>
    </ligand>
</feature>
<feature type="binding site" evidence="1">
    <location>
        <position position="111"/>
    </location>
    <ligand>
        <name>Mg(2+)</name>
        <dbReference type="ChEBI" id="CHEBI:18420"/>
    </ligand>
</feature>
<feature type="binding site" evidence="1">
    <location>
        <position position="114"/>
    </location>
    <ligand>
        <name>Mg(2+)</name>
        <dbReference type="ChEBI" id="CHEBI:18420"/>
    </ligand>
</feature>
<dbReference type="EC" id="3.1.26.3" evidence="1"/>
<dbReference type="EMBL" id="CP000437">
    <property type="protein sequence ID" value="ABI82527.1"/>
    <property type="molecule type" value="Genomic_DNA"/>
</dbReference>
<dbReference type="RefSeq" id="WP_011648609.1">
    <property type="nucleotide sequence ID" value="NC_017463.1"/>
</dbReference>
<dbReference type="SMR" id="Q0BN07"/>
<dbReference type="KEGG" id="fth:FTH_0555"/>
<dbReference type="GO" id="GO:0005737">
    <property type="term" value="C:cytoplasm"/>
    <property type="evidence" value="ECO:0007669"/>
    <property type="project" value="UniProtKB-SubCell"/>
</dbReference>
<dbReference type="GO" id="GO:0003725">
    <property type="term" value="F:double-stranded RNA binding"/>
    <property type="evidence" value="ECO:0007669"/>
    <property type="project" value="TreeGrafter"/>
</dbReference>
<dbReference type="GO" id="GO:0046872">
    <property type="term" value="F:metal ion binding"/>
    <property type="evidence" value="ECO:0007669"/>
    <property type="project" value="UniProtKB-KW"/>
</dbReference>
<dbReference type="GO" id="GO:0004525">
    <property type="term" value="F:ribonuclease III activity"/>
    <property type="evidence" value="ECO:0007669"/>
    <property type="project" value="UniProtKB-UniRule"/>
</dbReference>
<dbReference type="GO" id="GO:0019843">
    <property type="term" value="F:rRNA binding"/>
    <property type="evidence" value="ECO:0007669"/>
    <property type="project" value="UniProtKB-KW"/>
</dbReference>
<dbReference type="GO" id="GO:0006397">
    <property type="term" value="P:mRNA processing"/>
    <property type="evidence" value="ECO:0007669"/>
    <property type="project" value="UniProtKB-UniRule"/>
</dbReference>
<dbReference type="GO" id="GO:0010468">
    <property type="term" value="P:regulation of gene expression"/>
    <property type="evidence" value="ECO:0007669"/>
    <property type="project" value="TreeGrafter"/>
</dbReference>
<dbReference type="GO" id="GO:0006364">
    <property type="term" value="P:rRNA processing"/>
    <property type="evidence" value="ECO:0007669"/>
    <property type="project" value="UniProtKB-UniRule"/>
</dbReference>
<dbReference type="GO" id="GO:0008033">
    <property type="term" value="P:tRNA processing"/>
    <property type="evidence" value="ECO:0007669"/>
    <property type="project" value="UniProtKB-KW"/>
</dbReference>
<dbReference type="CDD" id="cd10845">
    <property type="entry name" value="DSRM_RNAse_III_family"/>
    <property type="match status" value="1"/>
</dbReference>
<dbReference type="CDD" id="cd00593">
    <property type="entry name" value="RIBOc"/>
    <property type="match status" value="1"/>
</dbReference>
<dbReference type="FunFam" id="1.10.1520.10:FF:000001">
    <property type="entry name" value="Ribonuclease 3"/>
    <property type="match status" value="1"/>
</dbReference>
<dbReference type="Gene3D" id="3.30.160.20">
    <property type="match status" value="1"/>
</dbReference>
<dbReference type="Gene3D" id="1.10.1520.10">
    <property type="entry name" value="Ribonuclease III domain"/>
    <property type="match status" value="1"/>
</dbReference>
<dbReference type="HAMAP" id="MF_00104">
    <property type="entry name" value="RNase_III"/>
    <property type="match status" value="1"/>
</dbReference>
<dbReference type="InterPro" id="IPR014720">
    <property type="entry name" value="dsRBD_dom"/>
</dbReference>
<dbReference type="InterPro" id="IPR011907">
    <property type="entry name" value="RNase_III"/>
</dbReference>
<dbReference type="InterPro" id="IPR000999">
    <property type="entry name" value="RNase_III_dom"/>
</dbReference>
<dbReference type="InterPro" id="IPR036389">
    <property type="entry name" value="RNase_III_sf"/>
</dbReference>
<dbReference type="NCBIfam" id="TIGR02191">
    <property type="entry name" value="RNaseIII"/>
    <property type="match status" value="1"/>
</dbReference>
<dbReference type="PANTHER" id="PTHR11207:SF0">
    <property type="entry name" value="RIBONUCLEASE 3"/>
    <property type="match status" value="1"/>
</dbReference>
<dbReference type="PANTHER" id="PTHR11207">
    <property type="entry name" value="RIBONUCLEASE III"/>
    <property type="match status" value="1"/>
</dbReference>
<dbReference type="Pfam" id="PF00035">
    <property type="entry name" value="dsrm"/>
    <property type="match status" value="1"/>
</dbReference>
<dbReference type="Pfam" id="PF14622">
    <property type="entry name" value="Ribonucleas_3_3"/>
    <property type="match status" value="1"/>
</dbReference>
<dbReference type="SMART" id="SM00358">
    <property type="entry name" value="DSRM"/>
    <property type="match status" value="1"/>
</dbReference>
<dbReference type="SMART" id="SM00535">
    <property type="entry name" value="RIBOc"/>
    <property type="match status" value="1"/>
</dbReference>
<dbReference type="SUPFAM" id="SSF54768">
    <property type="entry name" value="dsRNA-binding domain-like"/>
    <property type="match status" value="1"/>
</dbReference>
<dbReference type="SUPFAM" id="SSF69065">
    <property type="entry name" value="RNase III domain-like"/>
    <property type="match status" value="1"/>
</dbReference>
<dbReference type="PROSITE" id="PS50137">
    <property type="entry name" value="DS_RBD"/>
    <property type="match status" value="1"/>
</dbReference>
<dbReference type="PROSITE" id="PS00517">
    <property type="entry name" value="RNASE_3_1"/>
    <property type="match status" value="1"/>
</dbReference>
<dbReference type="PROSITE" id="PS50142">
    <property type="entry name" value="RNASE_3_2"/>
    <property type="match status" value="1"/>
</dbReference>
<protein>
    <recommendedName>
        <fullName evidence="1">Ribonuclease 3</fullName>
        <ecNumber evidence="1">3.1.26.3</ecNumber>
    </recommendedName>
    <alternativeName>
        <fullName evidence="1">Ribonuclease III</fullName>
        <shortName evidence="1">RNase III</shortName>
    </alternativeName>
</protein>
<name>RNC_FRATO</name>
<accession>Q0BN07</accession>
<reference key="1">
    <citation type="journal article" date="2006" name="J. Bacteriol.">
        <title>Chromosome rearrangement and diversification of Francisella tularensis revealed by the type B (OSU18) genome sequence.</title>
        <authorList>
            <person name="Petrosino J.F."/>
            <person name="Xiang Q."/>
            <person name="Karpathy S.E."/>
            <person name="Jiang H."/>
            <person name="Yerrapragada S."/>
            <person name="Liu Y."/>
            <person name="Gioia J."/>
            <person name="Hemphill L."/>
            <person name="Gonzalez A."/>
            <person name="Raghavan T.M."/>
            <person name="Uzman A."/>
            <person name="Fox G.E."/>
            <person name="Highlander S."/>
            <person name="Reichard M."/>
            <person name="Morton R.J."/>
            <person name="Clinkenbeard K.D."/>
            <person name="Weinstock G.M."/>
        </authorList>
    </citation>
    <scope>NUCLEOTIDE SEQUENCE [LARGE SCALE GENOMIC DNA]</scope>
    <source>
        <strain>OSU18</strain>
    </source>
</reference>
<gene>
    <name evidence="1" type="primary">rnc</name>
    <name type="ordered locus">FTH_0555</name>
</gene>
<keyword id="KW-0963">Cytoplasm</keyword>
<keyword id="KW-0255">Endonuclease</keyword>
<keyword id="KW-0378">Hydrolase</keyword>
<keyword id="KW-0460">Magnesium</keyword>
<keyword id="KW-0479">Metal-binding</keyword>
<keyword id="KW-0507">mRNA processing</keyword>
<keyword id="KW-0540">Nuclease</keyword>
<keyword id="KW-0694">RNA-binding</keyword>
<keyword id="KW-0698">rRNA processing</keyword>
<keyword id="KW-0699">rRNA-binding</keyword>
<keyword id="KW-0819">tRNA processing</keyword>
<evidence type="ECO:0000255" key="1">
    <source>
        <dbReference type="HAMAP-Rule" id="MF_00104"/>
    </source>
</evidence>
<comment type="function">
    <text evidence="1">Digests double-stranded RNA. Involved in the processing of primary rRNA transcript to yield the immediate precursors to the large and small rRNAs (23S and 16S). Processes some mRNAs, and tRNAs when they are encoded in the rRNA operon. Processes pre-crRNA and tracrRNA of type II CRISPR loci if present in the organism.</text>
</comment>
<comment type="catalytic activity">
    <reaction evidence="1">
        <text>Endonucleolytic cleavage to 5'-phosphomonoester.</text>
        <dbReference type="EC" id="3.1.26.3"/>
    </reaction>
</comment>
<comment type="cofactor">
    <cofactor evidence="1">
        <name>Mg(2+)</name>
        <dbReference type="ChEBI" id="CHEBI:18420"/>
    </cofactor>
</comment>
<comment type="subunit">
    <text evidence="1">Homodimer.</text>
</comment>
<comment type="subcellular location">
    <subcellularLocation>
        <location evidence="1">Cytoplasm</location>
    </subcellularLocation>
</comment>
<comment type="similarity">
    <text evidence="1">Belongs to the ribonuclease III family.</text>
</comment>
<organism>
    <name type="scientific">Francisella tularensis subsp. holarctica (strain OSU18)</name>
    <dbReference type="NCBI Taxonomy" id="393011"/>
    <lineage>
        <taxon>Bacteria</taxon>
        <taxon>Pseudomonadati</taxon>
        <taxon>Pseudomonadota</taxon>
        <taxon>Gammaproteobacteria</taxon>
        <taxon>Thiotrichales</taxon>
        <taxon>Francisellaceae</taxon>
        <taxon>Francisella</taxon>
    </lineage>
</organism>
<sequence>MVPEYSRFYNILGYNFKDYTLLIRALTHRSKTKKNYERLEFLGDSVLSFVIAEVLYKQFTDLAEGKLSQLRSKLVKGTTLAQLASSLKMDEYIILGASEQGGHKREKILEDVFEAVIGAIYLDSDFATVKKVILKWYQPIISSINLDTIKFKDSKSKLQEILLQNALSLPEYSIETIDGKDHEQQFTVVAVSKDLNLRVKAQGTSRKKAEQKTAEKMIEMLSQQGLHEKK</sequence>
<proteinExistence type="inferred from homology"/>